<keyword id="KW-0997">Cell inner membrane</keyword>
<keyword id="KW-1003">Cell membrane</keyword>
<keyword id="KW-0472">Membrane</keyword>
<keyword id="KW-1185">Reference proteome</keyword>
<keyword id="KW-0812">Transmembrane</keyword>
<keyword id="KW-1133">Transmembrane helix</keyword>
<sequence>MSEPLKPRIDFEQPLQSLDEPVLKSAQAFDEQAAEKFYPAAPELDAEDEEGRVEGLVNAALKPKRSLWRKMVTAGMVILGASVIAQSVQWVNQAWQQQDWIALGATTAGGLIILAGVGSVVTEWRRLYHLRQRAEERDIARALLVSHGVGQGRVFCEKLARQAGLDQGHPALQRWQASLHETHNDREVVELYAKLVQPALDNQARAEISRYAAESALMIAVSPLALVDMAFIAWRNIRLINRIAALYGIELGYFSRIRLFRLVLLNIAFAGASELVREVGMDWLSQDLAARLSARAAQGIGAGLLTARLGIKAMELCRPLPWLEGDKPKLGDFRRQLMNQLKNTLPKKDKTAH</sequence>
<gene>
    <name type="ordered locus">YPO2347</name>
    <name type="ordered locus">y1985</name>
    <name type="ordered locus">YP_2134</name>
</gene>
<feature type="chain" id="PRO_0000214192" description="UPF0283 membrane protein YPO2347/y1985/YP_2134">
    <location>
        <begin position="1"/>
        <end position="353"/>
    </location>
</feature>
<feature type="transmembrane region" description="Helical" evidence="1">
    <location>
        <begin position="71"/>
        <end position="91"/>
    </location>
</feature>
<feature type="transmembrane region" description="Helical" evidence="1">
    <location>
        <begin position="101"/>
        <end position="121"/>
    </location>
</feature>
<feature type="transmembrane region" description="Helical" evidence="1">
    <location>
        <begin position="214"/>
        <end position="234"/>
    </location>
</feature>
<name>Y2347_YERPE</name>
<proteinExistence type="inferred from homology"/>
<dbReference type="EMBL" id="AL590842">
    <property type="protein sequence ID" value="CAL20975.1"/>
    <property type="molecule type" value="Genomic_DNA"/>
</dbReference>
<dbReference type="EMBL" id="AE009952">
    <property type="protein sequence ID" value="AAM85551.1"/>
    <property type="molecule type" value="Genomic_DNA"/>
</dbReference>
<dbReference type="EMBL" id="AE017042">
    <property type="protein sequence ID" value="AAS62343.1"/>
    <property type="molecule type" value="Genomic_DNA"/>
</dbReference>
<dbReference type="PIR" id="AD0286">
    <property type="entry name" value="AD0286"/>
</dbReference>
<dbReference type="RefSeq" id="WP_002210980.1">
    <property type="nucleotide sequence ID" value="NZ_WUCM01000120.1"/>
</dbReference>
<dbReference type="RefSeq" id="YP_002347314.1">
    <property type="nucleotide sequence ID" value="NC_003143.1"/>
</dbReference>
<dbReference type="IntAct" id="Q8ZE38">
    <property type="interactions" value="2"/>
</dbReference>
<dbReference type="STRING" id="214092.YPO2347"/>
<dbReference type="PaxDb" id="214092-YPO2347"/>
<dbReference type="DNASU" id="1146932"/>
<dbReference type="EnsemblBacteria" id="AAS62343">
    <property type="protein sequence ID" value="AAS62343"/>
    <property type="gene ID" value="YP_2134"/>
</dbReference>
<dbReference type="KEGG" id="ype:YPO2347"/>
<dbReference type="KEGG" id="ypk:y1985"/>
<dbReference type="KEGG" id="ypm:YP_2134"/>
<dbReference type="PATRIC" id="fig|214092.21.peg.2753"/>
<dbReference type="eggNOG" id="COG3768">
    <property type="taxonomic scope" value="Bacteria"/>
</dbReference>
<dbReference type="HOGENOM" id="CLU_057693_2_0_6"/>
<dbReference type="OMA" id="MFFIAWR"/>
<dbReference type="OrthoDB" id="958025at2"/>
<dbReference type="Proteomes" id="UP000000815">
    <property type="component" value="Chromosome"/>
</dbReference>
<dbReference type="Proteomes" id="UP000001019">
    <property type="component" value="Chromosome"/>
</dbReference>
<dbReference type="Proteomes" id="UP000002490">
    <property type="component" value="Chromosome"/>
</dbReference>
<dbReference type="GO" id="GO:0005886">
    <property type="term" value="C:plasma membrane"/>
    <property type="evidence" value="ECO:0000318"/>
    <property type="project" value="GO_Central"/>
</dbReference>
<dbReference type="HAMAP" id="MF_01085">
    <property type="entry name" value="UPF0283"/>
    <property type="match status" value="1"/>
</dbReference>
<dbReference type="InterPro" id="IPR021147">
    <property type="entry name" value="DUF697"/>
</dbReference>
<dbReference type="InterPro" id="IPR006507">
    <property type="entry name" value="UPF0283"/>
</dbReference>
<dbReference type="NCBIfam" id="TIGR01620">
    <property type="entry name" value="hyp_HI0043"/>
    <property type="match status" value="1"/>
</dbReference>
<dbReference type="PANTHER" id="PTHR39342">
    <property type="entry name" value="UPF0283 MEMBRANE PROTEIN YCJF"/>
    <property type="match status" value="1"/>
</dbReference>
<dbReference type="PANTHER" id="PTHR39342:SF1">
    <property type="entry name" value="UPF0283 MEMBRANE PROTEIN YCJF"/>
    <property type="match status" value="1"/>
</dbReference>
<dbReference type="Pfam" id="PF05128">
    <property type="entry name" value="DUF697"/>
    <property type="match status" value="1"/>
</dbReference>
<organism>
    <name type="scientific">Yersinia pestis</name>
    <dbReference type="NCBI Taxonomy" id="632"/>
    <lineage>
        <taxon>Bacteria</taxon>
        <taxon>Pseudomonadati</taxon>
        <taxon>Pseudomonadota</taxon>
        <taxon>Gammaproteobacteria</taxon>
        <taxon>Enterobacterales</taxon>
        <taxon>Yersiniaceae</taxon>
        <taxon>Yersinia</taxon>
    </lineage>
</organism>
<protein>
    <recommendedName>
        <fullName evidence="1">UPF0283 membrane protein YPO2347/y1985/YP_2134</fullName>
    </recommendedName>
</protein>
<reference key="1">
    <citation type="journal article" date="2001" name="Nature">
        <title>Genome sequence of Yersinia pestis, the causative agent of plague.</title>
        <authorList>
            <person name="Parkhill J."/>
            <person name="Wren B.W."/>
            <person name="Thomson N.R."/>
            <person name="Titball R.W."/>
            <person name="Holden M.T.G."/>
            <person name="Prentice M.B."/>
            <person name="Sebaihia M."/>
            <person name="James K.D."/>
            <person name="Churcher C.M."/>
            <person name="Mungall K.L."/>
            <person name="Baker S."/>
            <person name="Basham D."/>
            <person name="Bentley S.D."/>
            <person name="Brooks K."/>
            <person name="Cerdeno-Tarraga A.-M."/>
            <person name="Chillingworth T."/>
            <person name="Cronin A."/>
            <person name="Davies R.M."/>
            <person name="Davis P."/>
            <person name="Dougan G."/>
            <person name="Feltwell T."/>
            <person name="Hamlin N."/>
            <person name="Holroyd S."/>
            <person name="Jagels K."/>
            <person name="Karlyshev A.V."/>
            <person name="Leather S."/>
            <person name="Moule S."/>
            <person name="Oyston P.C.F."/>
            <person name="Quail M.A."/>
            <person name="Rutherford K.M."/>
            <person name="Simmonds M."/>
            <person name="Skelton J."/>
            <person name="Stevens K."/>
            <person name="Whitehead S."/>
            <person name="Barrell B.G."/>
        </authorList>
    </citation>
    <scope>NUCLEOTIDE SEQUENCE [LARGE SCALE GENOMIC DNA]</scope>
    <source>
        <strain>CO-92 / Biovar Orientalis</strain>
    </source>
</reference>
<reference key="2">
    <citation type="journal article" date="2002" name="J. Bacteriol.">
        <title>Genome sequence of Yersinia pestis KIM.</title>
        <authorList>
            <person name="Deng W."/>
            <person name="Burland V."/>
            <person name="Plunkett G. III"/>
            <person name="Boutin A."/>
            <person name="Mayhew G.F."/>
            <person name="Liss P."/>
            <person name="Perna N.T."/>
            <person name="Rose D.J."/>
            <person name="Mau B."/>
            <person name="Zhou S."/>
            <person name="Schwartz D.C."/>
            <person name="Fetherston J.D."/>
            <person name="Lindler L.E."/>
            <person name="Brubaker R.R."/>
            <person name="Plano G.V."/>
            <person name="Straley S.C."/>
            <person name="McDonough K.A."/>
            <person name="Nilles M.L."/>
            <person name="Matson J.S."/>
            <person name="Blattner F.R."/>
            <person name="Perry R.D."/>
        </authorList>
    </citation>
    <scope>NUCLEOTIDE SEQUENCE [LARGE SCALE GENOMIC DNA]</scope>
    <source>
        <strain>KIM10+ / Biovar Mediaevalis</strain>
    </source>
</reference>
<reference key="3">
    <citation type="journal article" date="2004" name="DNA Res.">
        <title>Complete genome sequence of Yersinia pestis strain 91001, an isolate avirulent to humans.</title>
        <authorList>
            <person name="Song Y."/>
            <person name="Tong Z."/>
            <person name="Wang J."/>
            <person name="Wang L."/>
            <person name="Guo Z."/>
            <person name="Han Y."/>
            <person name="Zhang J."/>
            <person name="Pei D."/>
            <person name="Zhou D."/>
            <person name="Qin H."/>
            <person name="Pang X."/>
            <person name="Han Y."/>
            <person name="Zhai J."/>
            <person name="Li M."/>
            <person name="Cui B."/>
            <person name="Qi Z."/>
            <person name="Jin L."/>
            <person name="Dai R."/>
            <person name="Chen F."/>
            <person name="Li S."/>
            <person name="Ye C."/>
            <person name="Du Z."/>
            <person name="Lin W."/>
            <person name="Wang J."/>
            <person name="Yu J."/>
            <person name="Yang H."/>
            <person name="Wang J."/>
            <person name="Huang P."/>
            <person name="Yang R."/>
        </authorList>
    </citation>
    <scope>NUCLEOTIDE SEQUENCE [LARGE SCALE GENOMIC DNA]</scope>
    <source>
        <strain>91001 / Biovar Mediaevalis</strain>
    </source>
</reference>
<evidence type="ECO:0000255" key="1">
    <source>
        <dbReference type="HAMAP-Rule" id="MF_01085"/>
    </source>
</evidence>
<accession>Q8ZE38</accession>
<accession>Q0WEH4</accession>
<comment type="subcellular location">
    <subcellularLocation>
        <location evidence="1">Cell inner membrane</location>
        <topology evidence="1">Multi-pass membrane protein</topology>
    </subcellularLocation>
</comment>
<comment type="similarity">
    <text evidence="1">Belongs to the UPF0283 family.</text>
</comment>